<comment type="function">
    <text evidence="1">Probable serine protease.</text>
</comment>
<comment type="subcellular location">
    <subcellularLocation>
        <location evidence="3">Membrane</location>
        <topology evidence="3">Multi-pass membrane protein</topology>
    </subcellularLocation>
</comment>
<comment type="similarity">
    <text evidence="3">Belongs to the peptidase S54 family.</text>
</comment>
<evidence type="ECO:0000250" key="1"/>
<evidence type="ECO:0000255" key="2"/>
<evidence type="ECO:0000305" key="3"/>
<accession>Q5UQ86</accession>
<organism>
    <name type="scientific">Acanthamoeba polyphaga mimivirus</name>
    <name type="common">APMV</name>
    <dbReference type="NCBI Taxonomy" id="212035"/>
    <lineage>
        <taxon>Viruses</taxon>
        <taxon>Varidnaviria</taxon>
        <taxon>Bamfordvirae</taxon>
        <taxon>Nucleocytoviricota</taxon>
        <taxon>Megaviricetes</taxon>
        <taxon>Imitervirales</taxon>
        <taxon>Mimiviridae</taxon>
        <taxon>Megamimivirinae</taxon>
        <taxon>Mimivirus</taxon>
        <taxon>Mimivirus bradfordmassiliense</taxon>
    </lineage>
</organism>
<dbReference type="EC" id="3.4.21.-"/>
<dbReference type="EMBL" id="AY653733">
    <property type="protein sequence ID" value="AAV50787.1"/>
    <property type="molecule type" value="Genomic_DNA"/>
</dbReference>
<dbReference type="SMR" id="Q5UQ86"/>
<dbReference type="KEGG" id="vg:9925155"/>
<dbReference type="Proteomes" id="UP000001134">
    <property type="component" value="Genome"/>
</dbReference>
<dbReference type="GO" id="GO:0016020">
    <property type="term" value="C:membrane"/>
    <property type="evidence" value="ECO:0007669"/>
    <property type="project" value="UniProtKB-SubCell"/>
</dbReference>
<dbReference type="GO" id="GO:0004252">
    <property type="term" value="F:serine-type endopeptidase activity"/>
    <property type="evidence" value="ECO:0007669"/>
    <property type="project" value="InterPro"/>
</dbReference>
<dbReference type="GO" id="GO:0006508">
    <property type="term" value="P:proteolysis"/>
    <property type="evidence" value="ECO:0007669"/>
    <property type="project" value="UniProtKB-KW"/>
</dbReference>
<dbReference type="Gene3D" id="1.20.1540.10">
    <property type="entry name" value="Rhomboid-like"/>
    <property type="match status" value="1"/>
</dbReference>
<dbReference type="InterPro" id="IPR022764">
    <property type="entry name" value="Peptidase_S54_rhomboid_dom"/>
</dbReference>
<dbReference type="InterPro" id="IPR035952">
    <property type="entry name" value="Rhomboid-like_sf"/>
</dbReference>
<dbReference type="PANTHER" id="PTHR43066:SF1">
    <property type="entry name" value="RHOMBOID PROTEIN 2"/>
    <property type="match status" value="1"/>
</dbReference>
<dbReference type="PANTHER" id="PTHR43066">
    <property type="entry name" value="RHOMBOID-RELATED PROTEIN"/>
    <property type="match status" value="1"/>
</dbReference>
<dbReference type="Pfam" id="PF01694">
    <property type="entry name" value="Rhomboid"/>
    <property type="match status" value="1"/>
</dbReference>
<dbReference type="SUPFAM" id="SSF144091">
    <property type="entry name" value="Rhomboid-like"/>
    <property type="match status" value="1"/>
</dbReference>
<organismHost>
    <name type="scientific">Acanthamoeba polyphaga</name>
    <name type="common">Amoeba</name>
    <dbReference type="NCBI Taxonomy" id="5757"/>
</organismHost>
<proteinExistence type="inferred from homology"/>
<keyword id="KW-0378">Hydrolase</keyword>
<keyword id="KW-0472">Membrane</keyword>
<keyword id="KW-0645">Protease</keyword>
<keyword id="KW-1185">Reference proteome</keyword>
<keyword id="KW-0720">Serine protease</keyword>
<keyword id="KW-0812">Transmembrane</keyword>
<keyword id="KW-1133">Transmembrane helix</keyword>
<feature type="chain" id="PRO_0000247283" description="Putative rhomboid protein L523">
    <location>
        <begin position="1"/>
        <end position="171"/>
    </location>
</feature>
<feature type="transmembrane region" description="Helical" evidence="2">
    <location>
        <begin position="3"/>
        <end position="23"/>
    </location>
</feature>
<feature type="transmembrane region" description="Helical" evidence="2">
    <location>
        <begin position="67"/>
        <end position="87"/>
    </location>
</feature>
<feature type="transmembrane region" description="Helical" evidence="2">
    <location>
        <begin position="94"/>
        <end position="114"/>
    </location>
</feature>
<feature type="transmembrane region" description="Helical" evidence="2">
    <location>
        <begin position="119"/>
        <end position="139"/>
    </location>
</feature>
<feature type="transmembrane region" description="Helical" evidence="2">
    <location>
        <begin position="144"/>
        <end position="164"/>
    </location>
</feature>
<feature type="active site" description="Nucleophile" evidence="1">
    <location>
        <position position="100"/>
    </location>
</feature>
<feature type="active site" evidence="1">
    <location>
        <position position="143"/>
    </location>
</feature>
<protein>
    <recommendedName>
        <fullName>Putative rhomboid protein L523</fullName>
        <ecNumber>3.4.21.-</ecNumber>
    </recommendedName>
</protein>
<reference key="1">
    <citation type="journal article" date="2004" name="Science">
        <title>The 1.2-megabase genome sequence of Mimivirus.</title>
        <authorList>
            <person name="Raoult D."/>
            <person name="Audic S."/>
            <person name="Robert C."/>
            <person name="Abergel C."/>
            <person name="Renesto P."/>
            <person name="Ogata H."/>
            <person name="La Scola B."/>
            <person name="Susan M."/>
            <person name="Claverie J.-M."/>
        </authorList>
    </citation>
    <scope>NUCLEOTIDE SEQUENCE [LARGE SCALE GENOMIC DNA]</scope>
    <source>
        <strain>Rowbotham-Bradford</strain>
    </source>
</reference>
<gene>
    <name type="ordered locus">MIMI_L523</name>
</gene>
<name>RHBDL_MIMIV</name>
<sequence>MRYVTYIVLLILVVIFFSPLNFFNTNSEIINYLIRTFYHANLQHLLANSFSFYMLSFLEDVMGHAKFAFCIIFIWILSSMLLLAEHTAFPSRKVYTVGFSGVIFGLIVVYLMSLGKNRGLSIAGLVLSIIPQFFVSGISYEGHICGMIAGFVYVVLFPLPKGSVDNQVAMF</sequence>